<keyword id="KW-0269">Exonuclease</keyword>
<keyword id="KW-0378">Hydrolase</keyword>
<keyword id="KW-0479">Metal-binding</keyword>
<keyword id="KW-0507">mRNA processing</keyword>
<keyword id="KW-0540">Nuclease</keyword>
<keyword id="KW-0539">Nucleus</keyword>
<keyword id="KW-0597">Phosphoprotein</keyword>
<keyword id="KW-1185">Reference proteome</keyword>
<keyword id="KW-0804">Transcription</keyword>
<keyword id="KW-0805">Transcription regulation</keyword>
<keyword id="KW-0806">Transcription termination</keyword>
<keyword id="KW-0862">Zinc</keyword>
<keyword id="KW-0863">Zinc-finger</keyword>
<sequence length="908" mass="103960">MGVPAFFRWLSRKYPSVIIECNENKQVDADTGRNIYEDPTLPNPNGIEFDNLYLDMNGIIHPCTHPEDKPAPKNEDEMMVAIFECIDRLFGIVRPRKLLYMAIDGVAPRAKMNQQRSRRFRAAKETTEKRLEIARIREELLSRGCKLPPEKEKGEHFDSNCITPGTPFMDRLSKCLHYFVHDRQNNNPAWKGIKVILSDANVPGEGEHKIMDYIRKQRAQPDHDPNTQHVLCGADADLIMLGLATHEPNFTIIREEFLPNKPRPCDICNGFGHEMDKCVGLGATAPTSANFKPDVPIGAEVKFIFVRLSVLREYLKQTLEMPNLPFEYSFERALDDWVFMCFFVGNDFLPHLPSLEIREGAVDRLVELYKKCVYKTRGYLTDSGDVNLDRVQLIMTDLGNAEDQIFKSRQRREEQFKARDKARKRQERNQDHGSLNQSAFGASAVGPNSQQRSVGNYKEEAAALRNRKRTSDMANLDDEDEEENNDEVRLWEDGFKDRYYESKFDVAPGNQQFRYAVALQYVRGLCWVLKYYYQGCASWNWYFPYHYAPFASDFVNIQGLSTMFEKGTKPFNPLEQLMGVFPAASSSHVPEPWAKLMSDPESPIIDFYPEDFKIDLNGKKFAWQGVALLPFVDEKRLFKALVPYYDQLTGEEVKRNKRGDNYLYISNQSPHYKKVKKISEKDDESVCKAISFDGMRGTLGKTELNTAISGVLKSPISGLSDINDNITVTTTFRDPEYDEDYIFEAKRLENAVDPPQVLPNEQSGNKHRPVIGFNSHLTRAYVPDSGHRMLNAGIRNQQGGGGNGGGGGGYGQGGGYGQGIGGNQGQSYQNNSRNYNYNYNNNYNQHQGGGYQNNYNNRQQQQYGHNQRFNQDNSNQQQRNFNNYNGPRNNNYQQQGGSRQQNQNYRRF</sequence>
<comment type="function">
    <text evidence="1 5">A 5'-3' exoribonuclease (PubMed:27292797). May promote the termination of transcription by RNA polymerase II and promote RNA degradation (PubMed:27292797). Involved in turnover of piRNA precursors (PubMed:27292797).</text>
</comment>
<comment type="subunit">
    <text evidence="3 5">Interacts with cuff and Rai1; the interaction with cuff may inhibit its role in RNA degradation.</text>
</comment>
<comment type="subcellular location">
    <subcellularLocation>
        <location evidence="3 5">Nucleus</location>
    </subcellularLocation>
</comment>
<comment type="similarity">
    <text evidence="6">Belongs to the 5'-3' exonuclease family. XRN2/RAT1 subfamily.</text>
</comment>
<comment type="sequence caution" evidence="6">
    <conflict type="erroneous termination">
        <sequence resource="EMBL-CDS" id="AAX33482"/>
    </conflict>
    <text>Truncated C-terminus.</text>
</comment>
<dbReference type="EC" id="3.1.13.-" evidence="5"/>
<dbReference type="EMBL" id="AE014134">
    <property type="protein sequence ID" value="AAF52452.2"/>
    <property type="molecule type" value="Genomic_DNA"/>
</dbReference>
<dbReference type="EMBL" id="AE014134">
    <property type="protein sequence ID" value="AGB92702.1"/>
    <property type="molecule type" value="Genomic_DNA"/>
</dbReference>
<dbReference type="EMBL" id="BT021334">
    <property type="protein sequence ID" value="AAX33482.1"/>
    <property type="status" value="ALT_SEQ"/>
    <property type="molecule type" value="mRNA"/>
</dbReference>
<dbReference type="EMBL" id="BT056259">
    <property type="protein sequence ID" value="ACL68706.1"/>
    <property type="molecule type" value="mRNA"/>
</dbReference>
<dbReference type="RefSeq" id="NP_001260166.1">
    <property type="nucleotide sequence ID" value="NM_001273237.1"/>
</dbReference>
<dbReference type="RefSeq" id="NP_609082.1">
    <property type="nucleotide sequence ID" value="NM_135238.3"/>
</dbReference>
<dbReference type="SMR" id="Q9VM71"/>
<dbReference type="BioGRID" id="60115">
    <property type="interactions" value="9"/>
</dbReference>
<dbReference type="FunCoup" id="Q9VM71">
    <property type="interactions" value="2786"/>
</dbReference>
<dbReference type="IntAct" id="Q9VM71">
    <property type="interactions" value="10"/>
</dbReference>
<dbReference type="STRING" id="7227.FBpp0078973"/>
<dbReference type="iPTMnet" id="Q9VM71"/>
<dbReference type="PaxDb" id="7227-FBpp0078973"/>
<dbReference type="DNASU" id="33964"/>
<dbReference type="EnsemblMetazoa" id="FBtr0079345">
    <property type="protein sequence ID" value="FBpp0078973"/>
    <property type="gene ID" value="FBgn0031868"/>
</dbReference>
<dbReference type="EnsemblMetazoa" id="FBtr0332324">
    <property type="protein sequence ID" value="FBpp0304602"/>
    <property type="gene ID" value="FBgn0031868"/>
</dbReference>
<dbReference type="GeneID" id="33964"/>
<dbReference type="KEGG" id="dme:Dmel_CG10354"/>
<dbReference type="UCSC" id="CG10354-RA">
    <property type="organism name" value="d. melanogaster"/>
</dbReference>
<dbReference type="AGR" id="FB:FBgn0031868"/>
<dbReference type="CTD" id="33964"/>
<dbReference type="FlyBase" id="FBgn0031868">
    <property type="gene designation" value="Rat1"/>
</dbReference>
<dbReference type="VEuPathDB" id="VectorBase:FBgn0031868"/>
<dbReference type="eggNOG" id="KOG2044">
    <property type="taxonomic scope" value="Eukaryota"/>
</dbReference>
<dbReference type="GeneTree" id="ENSGT00670000098098"/>
<dbReference type="HOGENOM" id="CLU_006038_1_2_1"/>
<dbReference type="InParanoid" id="Q9VM71"/>
<dbReference type="OMA" id="ITHDMVV"/>
<dbReference type="OrthoDB" id="372487at2759"/>
<dbReference type="PhylomeDB" id="Q9VM71"/>
<dbReference type="BioGRID-ORCS" id="33964">
    <property type="hits" value="0 hits in 1 CRISPR screen"/>
</dbReference>
<dbReference type="ChiTaRS" id="Su(var)205">
    <property type="organism name" value="fly"/>
</dbReference>
<dbReference type="GenomeRNAi" id="33964"/>
<dbReference type="PRO" id="PR:Q9VM71"/>
<dbReference type="Proteomes" id="UP000000803">
    <property type="component" value="Chromosome 2L"/>
</dbReference>
<dbReference type="Bgee" id="FBgn0031868">
    <property type="expression patterns" value="Expressed in T neuron T4c (Drosophila) in embryonic/larval optic lobe (Drosophila) and 98 other cell types or tissues"/>
</dbReference>
<dbReference type="ExpressionAtlas" id="Q9VM71">
    <property type="expression patterns" value="baseline and differential"/>
</dbReference>
<dbReference type="GO" id="GO:0005634">
    <property type="term" value="C:nucleus"/>
    <property type="evidence" value="ECO:0000314"/>
    <property type="project" value="UniProtKB"/>
</dbReference>
<dbReference type="GO" id="GO:0008409">
    <property type="term" value="F:5'-3' exonuclease activity"/>
    <property type="evidence" value="ECO:0000250"/>
    <property type="project" value="UniProtKB"/>
</dbReference>
<dbReference type="GO" id="GO:0004534">
    <property type="term" value="F:5'-3' RNA exonuclease activity"/>
    <property type="evidence" value="ECO:0000314"/>
    <property type="project" value="FlyBase"/>
</dbReference>
<dbReference type="GO" id="GO:0003723">
    <property type="term" value="F:RNA binding"/>
    <property type="evidence" value="ECO:0000318"/>
    <property type="project" value="GO_Central"/>
</dbReference>
<dbReference type="GO" id="GO:0008270">
    <property type="term" value="F:zinc ion binding"/>
    <property type="evidence" value="ECO:0007669"/>
    <property type="project" value="UniProtKB-KW"/>
</dbReference>
<dbReference type="GO" id="GO:0006397">
    <property type="term" value="P:mRNA processing"/>
    <property type="evidence" value="ECO:0007669"/>
    <property type="project" value="UniProtKB-KW"/>
</dbReference>
<dbReference type="GO" id="GO:0000956">
    <property type="term" value="P:nuclear-transcribed mRNA catabolic process"/>
    <property type="evidence" value="ECO:0000318"/>
    <property type="project" value="GO_Central"/>
</dbReference>
<dbReference type="GO" id="GO:0006369">
    <property type="term" value="P:termination of RNA polymerase II transcription"/>
    <property type="evidence" value="ECO:0000250"/>
    <property type="project" value="UniProtKB"/>
</dbReference>
<dbReference type="CDD" id="cd18673">
    <property type="entry name" value="PIN_XRN1-2-like"/>
    <property type="match status" value="1"/>
</dbReference>
<dbReference type="FunFam" id="1.25.40.1050:FF:000002">
    <property type="entry name" value="5'-3' exoribonuclease"/>
    <property type="match status" value="1"/>
</dbReference>
<dbReference type="FunFam" id="3.40.50.12390:FF:000001">
    <property type="entry name" value="5'-3' exoribonuclease"/>
    <property type="match status" value="1"/>
</dbReference>
<dbReference type="FunFam" id="3.40.50.12390:FF:000003">
    <property type="entry name" value="5'-3' exoribonuclease"/>
    <property type="match status" value="1"/>
</dbReference>
<dbReference type="Gene3D" id="1.25.40.1050">
    <property type="match status" value="1"/>
</dbReference>
<dbReference type="Gene3D" id="3.40.50.12390">
    <property type="match status" value="2"/>
</dbReference>
<dbReference type="InterPro" id="IPR027073">
    <property type="entry name" value="5_3_exoribonuclease"/>
</dbReference>
<dbReference type="InterPro" id="IPR041412">
    <property type="entry name" value="Xrn1_helical"/>
</dbReference>
<dbReference type="InterPro" id="IPR004859">
    <property type="entry name" value="Xrn1_N"/>
</dbReference>
<dbReference type="InterPro" id="IPR017151">
    <property type="entry name" value="Xrn2/3/4"/>
</dbReference>
<dbReference type="PANTHER" id="PTHR12341:SF41">
    <property type="entry name" value="5'-3' EXORIBONUCLEASE 2"/>
    <property type="match status" value="1"/>
</dbReference>
<dbReference type="PANTHER" id="PTHR12341">
    <property type="entry name" value="5'-&gt;3' EXORIBONUCLEASE"/>
    <property type="match status" value="1"/>
</dbReference>
<dbReference type="Pfam" id="PF17846">
    <property type="entry name" value="XRN_M"/>
    <property type="match status" value="1"/>
</dbReference>
<dbReference type="Pfam" id="PF03159">
    <property type="entry name" value="XRN_N"/>
    <property type="match status" value="1"/>
</dbReference>
<dbReference type="PIRSF" id="PIRSF037239">
    <property type="entry name" value="Exonuclease_Xrn2"/>
    <property type="match status" value="1"/>
</dbReference>
<name>XRN2_DROME</name>
<organism evidence="9">
    <name type="scientific">Drosophila melanogaster</name>
    <name type="common">Fruit fly</name>
    <dbReference type="NCBI Taxonomy" id="7227"/>
    <lineage>
        <taxon>Eukaryota</taxon>
        <taxon>Metazoa</taxon>
        <taxon>Ecdysozoa</taxon>
        <taxon>Arthropoda</taxon>
        <taxon>Hexapoda</taxon>
        <taxon>Insecta</taxon>
        <taxon>Pterygota</taxon>
        <taxon>Neoptera</taxon>
        <taxon>Endopterygota</taxon>
        <taxon>Diptera</taxon>
        <taxon>Brachycera</taxon>
        <taxon>Muscomorpha</taxon>
        <taxon>Ephydroidea</taxon>
        <taxon>Drosophilidae</taxon>
        <taxon>Drosophila</taxon>
        <taxon>Sophophora</taxon>
    </lineage>
</organism>
<reference key="1">
    <citation type="journal article" date="2000" name="Science">
        <title>The genome sequence of Drosophila melanogaster.</title>
        <authorList>
            <person name="Adams M.D."/>
            <person name="Celniker S.E."/>
            <person name="Holt R.A."/>
            <person name="Evans C.A."/>
            <person name="Gocayne J.D."/>
            <person name="Amanatides P.G."/>
            <person name="Scherer S.E."/>
            <person name="Li P.W."/>
            <person name="Hoskins R.A."/>
            <person name="Galle R.F."/>
            <person name="George R.A."/>
            <person name="Lewis S.E."/>
            <person name="Richards S."/>
            <person name="Ashburner M."/>
            <person name="Henderson S.N."/>
            <person name="Sutton G.G."/>
            <person name="Wortman J.R."/>
            <person name="Yandell M.D."/>
            <person name="Zhang Q."/>
            <person name="Chen L.X."/>
            <person name="Brandon R.C."/>
            <person name="Rogers Y.-H.C."/>
            <person name="Blazej R.G."/>
            <person name="Champe M."/>
            <person name="Pfeiffer B.D."/>
            <person name="Wan K.H."/>
            <person name="Doyle C."/>
            <person name="Baxter E.G."/>
            <person name="Helt G."/>
            <person name="Nelson C.R."/>
            <person name="Miklos G.L.G."/>
            <person name="Abril J.F."/>
            <person name="Agbayani A."/>
            <person name="An H.-J."/>
            <person name="Andrews-Pfannkoch C."/>
            <person name="Baldwin D."/>
            <person name="Ballew R.M."/>
            <person name="Basu A."/>
            <person name="Baxendale J."/>
            <person name="Bayraktaroglu L."/>
            <person name="Beasley E.M."/>
            <person name="Beeson K.Y."/>
            <person name="Benos P.V."/>
            <person name="Berman B.P."/>
            <person name="Bhandari D."/>
            <person name="Bolshakov S."/>
            <person name="Borkova D."/>
            <person name="Botchan M.R."/>
            <person name="Bouck J."/>
            <person name="Brokstein P."/>
            <person name="Brottier P."/>
            <person name="Burtis K.C."/>
            <person name="Busam D.A."/>
            <person name="Butler H."/>
            <person name="Cadieu E."/>
            <person name="Center A."/>
            <person name="Chandra I."/>
            <person name="Cherry J.M."/>
            <person name="Cawley S."/>
            <person name="Dahlke C."/>
            <person name="Davenport L.B."/>
            <person name="Davies P."/>
            <person name="de Pablos B."/>
            <person name="Delcher A."/>
            <person name="Deng Z."/>
            <person name="Mays A.D."/>
            <person name="Dew I."/>
            <person name="Dietz S.M."/>
            <person name="Dodson K."/>
            <person name="Doup L.E."/>
            <person name="Downes M."/>
            <person name="Dugan-Rocha S."/>
            <person name="Dunkov B.C."/>
            <person name="Dunn P."/>
            <person name="Durbin K.J."/>
            <person name="Evangelista C.C."/>
            <person name="Ferraz C."/>
            <person name="Ferriera S."/>
            <person name="Fleischmann W."/>
            <person name="Fosler C."/>
            <person name="Gabrielian A.E."/>
            <person name="Garg N.S."/>
            <person name="Gelbart W.M."/>
            <person name="Glasser K."/>
            <person name="Glodek A."/>
            <person name="Gong F."/>
            <person name="Gorrell J.H."/>
            <person name="Gu Z."/>
            <person name="Guan P."/>
            <person name="Harris M."/>
            <person name="Harris N.L."/>
            <person name="Harvey D.A."/>
            <person name="Heiman T.J."/>
            <person name="Hernandez J.R."/>
            <person name="Houck J."/>
            <person name="Hostin D."/>
            <person name="Houston K.A."/>
            <person name="Howland T.J."/>
            <person name="Wei M.-H."/>
            <person name="Ibegwam C."/>
            <person name="Jalali M."/>
            <person name="Kalush F."/>
            <person name="Karpen G.H."/>
            <person name="Ke Z."/>
            <person name="Kennison J.A."/>
            <person name="Ketchum K.A."/>
            <person name="Kimmel B.E."/>
            <person name="Kodira C.D."/>
            <person name="Kraft C.L."/>
            <person name="Kravitz S."/>
            <person name="Kulp D."/>
            <person name="Lai Z."/>
            <person name="Lasko P."/>
            <person name="Lei Y."/>
            <person name="Levitsky A.A."/>
            <person name="Li J.H."/>
            <person name="Li Z."/>
            <person name="Liang Y."/>
            <person name="Lin X."/>
            <person name="Liu X."/>
            <person name="Mattei B."/>
            <person name="McIntosh T.C."/>
            <person name="McLeod M.P."/>
            <person name="McPherson D."/>
            <person name="Merkulov G."/>
            <person name="Milshina N.V."/>
            <person name="Mobarry C."/>
            <person name="Morris J."/>
            <person name="Moshrefi A."/>
            <person name="Mount S.M."/>
            <person name="Moy M."/>
            <person name="Murphy B."/>
            <person name="Murphy L."/>
            <person name="Muzny D.M."/>
            <person name="Nelson D.L."/>
            <person name="Nelson D.R."/>
            <person name="Nelson K.A."/>
            <person name="Nixon K."/>
            <person name="Nusskern D.R."/>
            <person name="Pacleb J.M."/>
            <person name="Palazzolo M."/>
            <person name="Pittman G.S."/>
            <person name="Pan S."/>
            <person name="Pollard J."/>
            <person name="Puri V."/>
            <person name="Reese M.G."/>
            <person name="Reinert K."/>
            <person name="Remington K."/>
            <person name="Saunders R.D.C."/>
            <person name="Scheeler F."/>
            <person name="Shen H."/>
            <person name="Shue B.C."/>
            <person name="Siden-Kiamos I."/>
            <person name="Simpson M."/>
            <person name="Skupski M.P."/>
            <person name="Smith T.J."/>
            <person name="Spier E."/>
            <person name="Spradling A.C."/>
            <person name="Stapleton M."/>
            <person name="Strong R."/>
            <person name="Sun E."/>
            <person name="Svirskas R."/>
            <person name="Tector C."/>
            <person name="Turner R."/>
            <person name="Venter E."/>
            <person name="Wang A.H."/>
            <person name="Wang X."/>
            <person name="Wang Z.-Y."/>
            <person name="Wassarman D.A."/>
            <person name="Weinstock G.M."/>
            <person name="Weissenbach J."/>
            <person name="Williams S.M."/>
            <person name="Woodage T."/>
            <person name="Worley K.C."/>
            <person name="Wu D."/>
            <person name="Yang S."/>
            <person name="Yao Q.A."/>
            <person name="Ye J."/>
            <person name="Yeh R.-F."/>
            <person name="Zaveri J.S."/>
            <person name="Zhan M."/>
            <person name="Zhang G."/>
            <person name="Zhao Q."/>
            <person name="Zheng L."/>
            <person name="Zheng X.H."/>
            <person name="Zhong F.N."/>
            <person name="Zhong W."/>
            <person name="Zhou X."/>
            <person name="Zhu S.C."/>
            <person name="Zhu X."/>
            <person name="Smith H.O."/>
            <person name="Gibbs R.A."/>
            <person name="Myers E.W."/>
            <person name="Rubin G.M."/>
            <person name="Venter J.C."/>
        </authorList>
    </citation>
    <scope>NUCLEOTIDE SEQUENCE [LARGE SCALE GENOMIC DNA]</scope>
    <source>
        <strain>Berkeley</strain>
    </source>
</reference>
<reference key="2">
    <citation type="journal article" date="2002" name="Genome Biol.">
        <title>Annotation of the Drosophila melanogaster euchromatic genome: a systematic review.</title>
        <authorList>
            <person name="Misra S."/>
            <person name="Crosby M.A."/>
            <person name="Mungall C.J."/>
            <person name="Matthews B.B."/>
            <person name="Campbell K.S."/>
            <person name="Hradecky P."/>
            <person name="Huang Y."/>
            <person name="Kaminker J.S."/>
            <person name="Millburn G.H."/>
            <person name="Prochnik S.E."/>
            <person name="Smith C.D."/>
            <person name="Tupy J.L."/>
            <person name="Whitfield E.J."/>
            <person name="Bayraktaroglu L."/>
            <person name="Berman B.P."/>
            <person name="Bettencourt B.R."/>
            <person name="Celniker S.E."/>
            <person name="de Grey A.D.N.J."/>
            <person name="Drysdale R.A."/>
            <person name="Harris N.L."/>
            <person name="Richter J."/>
            <person name="Russo S."/>
            <person name="Schroeder A.J."/>
            <person name="Shu S.Q."/>
            <person name="Stapleton M."/>
            <person name="Yamada C."/>
            <person name="Ashburner M."/>
            <person name="Gelbart W.M."/>
            <person name="Rubin G.M."/>
            <person name="Lewis S.E."/>
        </authorList>
    </citation>
    <scope>GENOME REANNOTATION</scope>
    <source>
        <strain>Berkeley</strain>
    </source>
</reference>
<reference key="3">
    <citation type="submission" date="2009-01" db="EMBL/GenBank/DDBJ databases">
        <authorList>
            <person name="Stapleton M."/>
            <person name="Carlson J.W."/>
            <person name="Booth B."/>
            <person name="Chavez C."/>
            <person name="Frise E."/>
            <person name="George R.A."/>
            <person name="Pacleb J.M."/>
            <person name="Park S."/>
            <person name="Wan K.H."/>
            <person name="Yu C."/>
            <person name="Rubin G.M."/>
            <person name="Celniker S.E."/>
        </authorList>
    </citation>
    <scope>NUCLEOTIDE SEQUENCE [LARGE SCALE MRNA]</scope>
    <source>
        <strain>Berkeley</strain>
        <tissue>Embryo</tissue>
    </source>
</reference>
<reference key="4">
    <citation type="journal article" date="2007" name="Curr. Biol.">
        <title>Cutoff and aubergine mutations result in retrotransposon upregulation and checkpoint activation in Drosophila.</title>
        <authorList>
            <person name="Chen Y."/>
            <person name="Pane A."/>
            <person name="Schuepbach T."/>
        </authorList>
    </citation>
    <scope>IDENTIFICATION</scope>
    <scope>SUBCELLULAR LOCATION</scope>
    <scope>NO INTERACTION WITH CUFF</scope>
</reference>
<reference key="5">
    <citation type="journal article" date="2008" name="J. Proteome Res.">
        <title>Phosphoproteome analysis of Drosophila melanogaster embryos.</title>
        <authorList>
            <person name="Zhai B."/>
            <person name="Villen J."/>
            <person name="Beausoleil S.A."/>
            <person name="Mintseris J."/>
            <person name="Gygi S.P."/>
        </authorList>
    </citation>
    <scope>PHOSPHORYLATION [LARGE SCALE ANALYSIS] AT SER-438</scope>
    <scope>IDENTIFICATION BY MASS SPECTROMETRY</scope>
    <source>
        <tissue>Embryo</tissue>
    </source>
</reference>
<reference key="6">
    <citation type="journal article" date="2016" name="Mol. Cell">
        <title>Cutoff Suppresses RNA Polymerase II Termination to Ensure Expression of piRNA Precursors.</title>
        <authorList>
            <person name="Chen Y.A."/>
            <person name="Stuwe E."/>
            <person name="Luo Y."/>
            <person name="Ninova M."/>
            <person name="Le Thomas A."/>
            <person name="Rozhavskaya E."/>
            <person name="Li S."/>
            <person name="Vempati S."/>
            <person name="Laver J.D."/>
            <person name="Patel D.J."/>
            <person name="Smibert C.A."/>
            <person name="Lipshitz H.D."/>
            <person name="Toth K.F."/>
            <person name="Aravin A.A."/>
        </authorList>
    </citation>
    <scope>FUNCTION</scope>
    <scope>INTERACTION WITH CUFF AND RAI1</scope>
    <scope>SUBCELLULAR LOCATION</scope>
</reference>
<proteinExistence type="evidence at protein level"/>
<gene>
    <name evidence="8" type="primary">Rat1</name>
    <name evidence="7" type="synonym">Xrn2</name>
    <name evidence="8" type="ORF">CG10354</name>
</gene>
<feature type="chain" id="PRO_0000249914" description="5'-3' exoribonuclease 2 homolog">
    <location>
        <begin position="1"/>
        <end position="908"/>
    </location>
</feature>
<feature type="zinc finger region" description="CCHC-type">
    <location>
        <begin position="263"/>
        <end position="280"/>
    </location>
</feature>
<feature type="region of interest" description="Disordered" evidence="2">
    <location>
        <begin position="409"/>
        <end position="457"/>
    </location>
</feature>
<feature type="region of interest" description="Disordered" evidence="2">
    <location>
        <begin position="821"/>
        <end position="908"/>
    </location>
</feature>
<feature type="compositionally biased region" description="Polar residues" evidence="2">
    <location>
        <begin position="432"/>
        <end position="454"/>
    </location>
</feature>
<feature type="compositionally biased region" description="Low complexity" evidence="2">
    <location>
        <begin position="825"/>
        <end position="868"/>
    </location>
</feature>
<feature type="compositionally biased region" description="Low complexity" evidence="2">
    <location>
        <begin position="878"/>
        <end position="908"/>
    </location>
</feature>
<feature type="modified residue" description="Phosphoserine" evidence="4">
    <location>
        <position position="438"/>
    </location>
</feature>
<accession>Q9VM71</accession>
<accession>B8A3W7</accession>
<accession>M9PEY6</accession>
<accession>Q5BI90</accession>
<protein>
    <recommendedName>
        <fullName evidence="6">5'-3' exoribonuclease 2 homolog</fullName>
        <ecNumber evidence="5">3.1.13.-</ecNumber>
    </recommendedName>
    <alternativeName>
        <fullName evidence="6">Ribonucleic acid-trafficking protein 1</fullName>
        <shortName evidence="6">dRAT1</shortName>
    </alternativeName>
</protein>
<evidence type="ECO:0000250" key="1"/>
<evidence type="ECO:0000256" key="2">
    <source>
        <dbReference type="SAM" id="MobiDB-lite"/>
    </source>
</evidence>
<evidence type="ECO:0000269" key="3">
    <source>
    </source>
</evidence>
<evidence type="ECO:0000269" key="4">
    <source>
    </source>
</evidence>
<evidence type="ECO:0000269" key="5">
    <source>
    </source>
</evidence>
<evidence type="ECO:0000305" key="6"/>
<evidence type="ECO:0000312" key="7">
    <source>
        <dbReference type="EMBL" id="AGB92702.1"/>
    </source>
</evidence>
<evidence type="ECO:0000312" key="8">
    <source>
        <dbReference type="FlyBase" id="FBgn0031868"/>
    </source>
</evidence>
<evidence type="ECO:0000312" key="9">
    <source>
        <dbReference type="Proteomes" id="UP000000803"/>
    </source>
</evidence>